<accession>B9DRJ4</accession>
<gene>
    <name evidence="1" type="primary">lgt</name>
    <name type="ordered locus">SUB0578</name>
</gene>
<organism>
    <name type="scientific">Streptococcus uberis (strain ATCC BAA-854 / 0140J)</name>
    <dbReference type="NCBI Taxonomy" id="218495"/>
    <lineage>
        <taxon>Bacteria</taxon>
        <taxon>Bacillati</taxon>
        <taxon>Bacillota</taxon>
        <taxon>Bacilli</taxon>
        <taxon>Lactobacillales</taxon>
        <taxon>Streptococcaceae</taxon>
        <taxon>Streptococcus</taxon>
    </lineage>
</organism>
<proteinExistence type="inferred from homology"/>
<reference key="1">
    <citation type="journal article" date="2009" name="BMC Genomics">
        <title>Evidence for niche adaptation in the genome of the bovine pathogen Streptococcus uberis.</title>
        <authorList>
            <person name="Ward P.N."/>
            <person name="Holden M.T.G."/>
            <person name="Leigh J.A."/>
            <person name="Lennard N."/>
            <person name="Bignell A."/>
            <person name="Barron A."/>
            <person name="Clark L."/>
            <person name="Quail M.A."/>
            <person name="Woodward J."/>
            <person name="Barrell B.G."/>
            <person name="Egan S.A."/>
            <person name="Field T.R."/>
            <person name="Maskell D."/>
            <person name="Kehoe M."/>
            <person name="Dowson C.G."/>
            <person name="Chanter N."/>
            <person name="Whatmore A.M."/>
            <person name="Bentley S.D."/>
            <person name="Parkhill J."/>
        </authorList>
    </citation>
    <scope>NUCLEOTIDE SEQUENCE [LARGE SCALE GENOMIC DNA]</scope>
    <source>
        <strain>ATCC BAA-854 / 0140J</strain>
    </source>
</reference>
<keyword id="KW-1003">Cell membrane</keyword>
<keyword id="KW-0472">Membrane</keyword>
<keyword id="KW-1185">Reference proteome</keyword>
<keyword id="KW-0808">Transferase</keyword>
<keyword id="KW-0812">Transmembrane</keyword>
<keyword id="KW-1133">Transmembrane helix</keyword>
<evidence type="ECO:0000255" key="1">
    <source>
        <dbReference type="HAMAP-Rule" id="MF_01147"/>
    </source>
</evidence>
<name>LGT_STRU0</name>
<comment type="function">
    <text evidence="1">Catalyzes the transfer of the diacylglyceryl group from phosphatidylglycerol to the sulfhydryl group of the N-terminal cysteine of a prolipoprotein, the first step in the formation of mature lipoproteins.</text>
</comment>
<comment type="catalytic activity">
    <reaction evidence="1">
        <text>L-cysteinyl-[prolipoprotein] + a 1,2-diacyl-sn-glycero-3-phospho-(1'-sn-glycerol) = an S-1,2-diacyl-sn-glyceryl-L-cysteinyl-[prolipoprotein] + sn-glycerol 1-phosphate + H(+)</text>
        <dbReference type="Rhea" id="RHEA:56712"/>
        <dbReference type="Rhea" id="RHEA-COMP:14679"/>
        <dbReference type="Rhea" id="RHEA-COMP:14680"/>
        <dbReference type="ChEBI" id="CHEBI:15378"/>
        <dbReference type="ChEBI" id="CHEBI:29950"/>
        <dbReference type="ChEBI" id="CHEBI:57685"/>
        <dbReference type="ChEBI" id="CHEBI:64716"/>
        <dbReference type="ChEBI" id="CHEBI:140658"/>
        <dbReference type="EC" id="2.5.1.145"/>
    </reaction>
</comment>
<comment type="pathway">
    <text evidence="1">Protein modification; lipoprotein biosynthesis (diacylglyceryl transfer).</text>
</comment>
<comment type="subcellular location">
    <subcellularLocation>
        <location evidence="1">Cell membrane</location>
        <topology evidence="1">Multi-pass membrane protein</topology>
    </subcellularLocation>
</comment>
<comment type="similarity">
    <text evidence="1">Belongs to the Lgt family.</text>
</comment>
<sequence>MIDPVAIQIGPFAIHWYALCIMTGLVLAVYLSSKEAPRKKMTSDDVIDFIIIAFPIAIIGARLYYVIFEWSYYSKHLNELLAIWNGGIAIYGGLITGAIVLFIYCYYKVLNPIRFLDIIAPGVMLAQAIGRWGNFINQEAYGRVVKALPYLPSFIQKQMFIDGHYRMPTFLFESVWNIIGFTIICYLRRQKKLLLEGEVLAFYLIWYGIGRFVIEGMRTDSLIFIGLRVSQIVSIVLIILGIVFVILRRRQKGIPYYQE</sequence>
<feature type="chain" id="PRO_1000164152" description="Phosphatidylglycerol--prolipoprotein diacylglyceryl transferase">
    <location>
        <begin position="1"/>
        <end position="259"/>
    </location>
</feature>
<feature type="transmembrane region" description="Helical" evidence="1">
    <location>
        <begin position="9"/>
        <end position="29"/>
    </location>
</feature>
<feature type="transmembrane region" description="Helical" evidence="1">
    <location>
        <begin position="47"/>
        <end position="67"/>
    </location>
</feature>
<feature type="transmembrane region" description="Helical" evidence="1">
    <location>
        <begin position="83"/>
        <end position="103"/>
    </location>
</feature>
<feature type="transmembrane region" description="Helical" evidence="1">
    <location>
        <begin position="109"/>
        <end position="129"/>
    </location>
</feature>
<feature type="transmembrane region" description="Helical" evidence="1">
    <location>
        <begin position="167"/>
        <end position="187"/>
    </location>
</feature>
<feature type="transmembrane region" description="Helical" evidence="1">
    <location>
        <begin position="194"/>
        <end position="214"/>
    </location>
</feature>
<feature type="transmembrane region" description="Helical" evidence="1">
    <location>
        <begin position="227"/>
        <end position="247"/>
    </location>
</feature>
<feature type="binding site" evidence="1">
    <location>
        <position position="131"/>
    </location>
    <ligand>
        <name>a 1,2-diacyl-sn-glycero-3-phospho-(1'-sn-glycerol)</name>
        <dbReference type="ChEBI" id="CHEBI:64716"/>
    </ligand>
</feature>
<protein>
    <recommendedName>
        <fullName evidence="1">Phosphatidylglycerol--prolipoprotein diacylglyceryl transferase</fullName>
        <ecNumber evidence="1">2.5.1.145</ecNumber>
    </recommendedName>
</protein>
<dbReference type="EC" id="2.5.1.145" evidence="1"/>
<dbReference type="EMBL" id="AM946015">
    <property type="protein sequence ID" value="CAR41372.1"/>
    <property type="molecule type" value="Genomic_DNA"/>
</dbReference>
<dbReference type="RefSeq" id="WP_012658103.1">
    <property type="nucleotide sequence ID" value="NC_012004.1"/>
</dbReference>
<dbReference type="SMR" id="B9DRJ4"/>
<dbReference type="STRING" id="218495.SUB0578"/>
<dbReference type="KEGG" id="sub:SUB0578"/>
<dbReference type="eggNOG" id="COG0682">
    <property type="taxonomic scope" value="Bacteria"/>
</dbReference>
<dbReference type="HOGENOM" id="CLU_013386_0_1_9"/>
<dbReference type="OrthoDB" id="871140at2"/>
<dbReference type="UniPathway" id="UPA00664"/>
<dbReference type="Proteomes" id="UP000000449">
    <property type="component" value="Chromosome"/>
</dbReference>
<dbReference type="GO" id="GO:0005886">
    <property type="term" value="C:plasma membrane"/>
    <property type="evidence" value="ECO:0007669"/>
    <property type="project" value="UniProtKB-SubCell"/>
</dbReference>
<dbReference type="GO" id="GO:0008961">
    <property type="term" value="F:phosphatidylglycerol-prolipoprotein diacylglyceryl transferase activity"/>
    <property type="evidence" value="ECO:0007669"/>
    <property type="project" value="UniProtKB-UniRule"/>
</dbReference>
<dbReference type="GO" id="GO:0042158">
    <property type="term" value="P:lipoprotein biosynthetic process"/>
    <property type="evidence" value="ECO:0007669"/>
    <property type="project" value="UniProtKB-UniRule"/>
</dbReference>
<dbReference type="HAMAP" id="MF_01147">
    <property type="entry name" value="Lgt"/>
    <property type="match status" value="1"/>
</dbReference>
<dbReference type="InterPro" id="IPR001640">
    <property type="entry name" value="Lgt"/>
</dbReference>
<dbReference type="NCBIfam" id="TIGR00544">
    <property type="entry name" value="lgt"/>
    <property type="match status" value="1"/>
</dbReference>
<dbReference type="PANTHER" id="PTHR30589:SF0">
    <property type="entry name" value="PHOSPHATIDYLGLYCEROL--PROLIPOPROTEIN DIACYLGLYCERYL TRANSFERASE"/>
    <property type="match status" value="1"/>
</dbReference>
<dbReference type="PANTHER" id="PTHR30589">
    <property type="entry name" value="PROLIPOPROTEIN DIACYLGLYCERYL TRANSFERASE"/>
    <property type="match status" value="1"/>
</dbReference>
<dbReference type="Pfam" id="PF01790">
    <property type="entry name" value="LGT"/>
    <property type="match status" value="1"/>
</dbReference>
<dbReference type="PROSITE" id="PS01311">
    <property type="entry name" value="LGT"/>
    <property type="match status" value="1"/>
</dbReference>